<protein>
    <recommendedName>
        <fullName evidence="1">Inner capsid protein VP2</fullName>
    </recommendedName>
</protein>
<dbReference type="EMBL" id="U00673">
    <property type="protein sequence ID" value="AAA17401.1"/>
    <property type="molecule type" value="Genomic_RNA"/>
</dbReference>
<dbReference type="PIR" id="A49808">
    <property type="entry name" value="A49808"/>
</dbReference>
<dbReference type="GO" id="GO:0039616">
    <property type="term" value="C:T=2 icosahedral viral capsid"/>
    <property type="evidence" value="ECO:0007669"/>
    <property type="project" value="UniProtKB-UniRule"/>
</dbReference>
<dbReference type="GO" id="GO:0039625">
    <property type="term" value="C:viral inner capsid"/>
    <property type="evidence" value="ECO:0007669"/>
    <property type="project" value="UniProtKB-UniRule"/>
</dbReference>
<dbReference type="GO" id="GO:0019013">
    <property type="term" value="C:viral nucleocapsid"/>
    <property type="evidence" value="ECO:0007669"/>
    <property type="project" value="UniProtKB-UniRule"/>
</dbReference>
<dbReference type="GO" id="GO:0003723">
    <property type="term" value="F:RNA binding"/>
    <property type="evidence" value="ECO:0007669"/>
    <property type="project" value="UniProtKB-UniRule"/>
</dbReference>
<dbReference type="HAMAP" id="MF_04123">
    <property type="entry name" value="Rota_VP2"/>
    <property type="match status" value="1"/>
</dbReference>
<dbReference type="InterPro" id="IPR007779">
    <property type="entry name" value="Rotavirus_VP2"/>
</dbReference>
<accession>Q86108</accession>
<organism>
    <name type="scientific">Rotavirus B (isolate RVB/Rat/United States/IDIR/1984/G1P[X])</name>
    <name type="common">RV-B</name>
    <name type="synonym">Rotavirus B (isolate infectious diarrhea of infant rats)</name>
    <dbReference type="NCBI Taxonomy" id="28877"/>
    <lineage>
        <taxon>Viruses</taxon>
        <taxon>Riboviria</taxon>
        <taxon>Orthornavirae</taxon>
        <taxon>Duplornaviricota</taxon>
        <taxon>Resentoviricetes</taxon>
        <taxon>Reovirales</taxon>
        <taxon>Sedoreoviridae</taxon>
        <taxon>Rotavirus</taxon>
        <taxon>Rotavirus B</taxon>
    </lineage>
</organism>
<name>VP2_ROTGI</name>
<evidence type="ECO:0000255" key="1">
    <source>
        <dbReference type="HAMAP-Rule" id="MF_04123"/>
    </source>
</evidence>
<comment type="function">
    <text evidence="1">Inner capsid protein that self-assembles to form an icosahedral capsid with a T=2 symmetry, which consists of 120 copies of VP2, with channels at each of its five-fold vertices. This capsid constitutes the innermost concentric layer of the viral mature particle. It encapsidates the polymerase VP1, the capping enzyme VP3 and the genomic dsRNA, thereby defining the core. The innermost VP2 capsid and the intermediate VP6 capsid remain intact following cell entry to protect the dsRNA from degradation and to prevent unfavorable antiviral responses in the host cell during all the replication cycle of the virus. Nascent transcripts are transcribed within the structural confines of this double-layered particle (DLP) and are extruded through the channels formed by VP2 N-termini. VP2 is required for the replicase activity of VP1 polymerase. Probably recruits a copy of a VP1-VP3 complex, potentially along with a segment of plus-strand RNA, as a decamer of VP2 assembles. May activate the autoinhibited VP1/RNA complex to coordinate packaging and genome replication.</text>
</comment>
<comment type="subunit">
    <text evidence="1">Homodecamer; each decamer is made up of two conformers of VP2, called VP2A and VP2B. Interacts with a VP1-VP3 complex. Interacts with the intermediate capsid protein VP6. Interacts with NSP5. Interacts (via N-terminus) with NSP2.</text>
</comment>
<comment type="subcellular location">
    <subcellularLocation>
        <location evidence="1">Virion</location>
    </subcellularLocation>
    <text evidence="1">Inner capsid protein. Also found in spherical cytoplasmic structures, called virus factories, that appear early after infection and are the site of viral replication and packaging.</text>
</comment>
<comment type="similarity">
    <text evidence="1">Belongs to the rotavirus VP2 family.</text>
</comment>
<keyword id="KW-0167">Capsid protein</keyword>
<keyword id="KW-1153">Inner capsid protein</keyword>
<keyword id="KW-0694">RNA-binding</keyword>
<keyword id="KW-1141">T=2 icosahedral capsid protein</keyword>
<keyword id="KW-0946">Virion</keyword>
<feature type="chain" id="PRO_0000369833" description="Inner capsid protein VP2">
    <location>
        <begin position="1"/>
        <end position="934"/>
    </location>
</feature>
<reference key="1">
    <citation type="journal article" date="1994" name="Virology">
        <title>Group B rotavirus VP2: sequence analysis, expression, and gene coding assignment.</title>
        <authorList>
            <person name="Lindsay D.A."/>
            <person name="Waggie K.S."/>
            <person name="Eiden J.J."/>
        </authorList>
    </citation>
    <scope>NUCLEOTIDE SEQUENCE [GENOMIC RNA]</scope>
</reference>
<proteinExistence type="inferred from homology"/>
<sequence length="934" mass="106015">MDFPNLVLSAKNSIQNVDSKDEKQKIIDQLISDIRGQNDGVIPDEVLSEIQQVAEINGLSFNYEKPVKQELLEQPDPTSVLSQEVFQIRTILSKTLFVDVEAEDYSVYIPDETSNLSPVQIDARPIQTYQPKALMYKDTAILPSNRDEVSDQYGADEILFDSHMFNDISQAQIRDFETYVLDKAMQIQSSLPNLDFVSSLDKEVNPFNVHNTLCLNFGQREYYNIIADRTNQSFQQRRQSVQFDNVVVDGVARRARVSLRLHPFDSQLLDIIRFNTIQDQPLADTMAEYQLVAADGFVATPRFRTDRDARLIADVRSRVMARLCELSPYFHRTRILSSMTDFNSLWKVNVFSSSIDNAKDAIYRMAEISFTVADATTSALSSVNIASAQQTLLVLLNMSLFRFEIEPVGSQSNFGAAVSAALMLVVFPTDEASMSNVTFDNLCNLVFNELIAWTVDRPTFVKRTGMTNAFEANVNIGGGNMTRDITAYMRFVLLRRPWAVFQRTYDDQYVADIMVPNIDEANVNDQSYMAINNLFSGLIQAAQRNPNPGRQIAATSFRKLLKSMKDSCCNRIMPLIRLMKYNVERIARIYRFFPYTADLVQRIPAFRDERIRIKVPVSGMLSIALGINKSPDVFDWYNLLRFADVIRTKNFAERQSLESIMVQALIRNDINPARSRKEYIQQNIKPATNVVASITKVPSATFTTILSDRMLNNEIRRTQSYIVVNRIRDAVRAAFEHVPTAEHGIAKGALLLPYPQNFQRSSVYVRKDNILYNAPVGVDRFSLDDLLNGRFYQGMVNRIQNMSPFVIAGPLQVRASNASAIDSVTSAYLTMSSPYDACVKPEDLRHNRIVQPPIVDFFSDSSITRPNTQFEQLMSKTSVFVIDAPKLIVQSDATVYNFDYRDIQLTTSVVDKLEFTSVKTPDVTLFNGMLVFED</sequence>
<organismHost>
    <name type="scientific">Homo sapiens</name>
    <name type="common">Human</name>
    <dbReference type="NCBI Taxonomy" id="9606"/>
</organismHost>
<organismHost>
    <name type="scientific">Rattus norvegicus</name>
    <name type="common">Rat</name>
    <dbReference type="NCBI Taxonomy" id="10116"/>
</organismHost>